<keyword id="KW-0040">ANK repeat</keyword>
<keyword id="KW-0106">Calcium</keyword>
<keyword id="KW-0107">Calcium channel</keyword>
<keyword id="KW-0109">Calcium transport</keyword>
<keyword id="KW-1003">Cell membrane</keyword>
<keyword id="KW-0407">Ion channel</keyword>
<keyword id="KW-0406">Ion transport</keyword>
<keyword id="KW-0472">Membrane</keyword>
<keyword id="KW-0597">Phosphoprotein</keyword>
<keyword id="KW-1185">Reference proteome</keyword>
<keyword id="KW-0677">Repeat</keyword>
<keyword id="KW-0812">Transmembrane</keyword>
<keyword id="KW-1133">Transmembrane helix</keyword>
<keyword id="KW-0813">Transport</keyword>
<reference key="1">
    <citation type="submission" date="1999-07" db="EMBL/GenBank/DDBJ databases">
        <authorList>
            <person name="Rae J.L."/>
        </authorList>
    </citation>
    <scope>NUCLEOTIDE SEQUENCE [MRNA]</scope>
    <source>
        <strain>New Zealand white</strain>
        <tissue>Cornea</tissue>
    </source>
</reference>
<feature type="chain" id="PRO_0000215305" description="Short transient receptor potential channel 1">
    <location>
        <begin position="1"/>
        <end position="759"/>
    </location>
</feature>
<feature type="topological domain" description="Cytoplasmic" evidence="4">
    <location>
        <begin position="1"/>
        <end position="352"/>
    </location>
</feature>
<feature type="transmembrane region" description="Helical" evidence="4">
    <location>
        <begin position="353"/>
        <end position="373"/>
    </location>
</feature>
<feature type="topological domain" description="Extracellular" evidence="4">
    <location>
        <begin position="374"/>
        <end position="381"/>
    </location>
</feature>
<feature type="transmembrane region" description="Helical" evidence="4">
    <location>
        <begin position="382"/>
        <end position="402"/>
    </location>
</feature>
<feature type="topological domain" description="Cytoplasmic" evidence="4">
    <location>
        <begin position="403"/>
        <end position="461"/>
    </location>
</feature>
<feature type="transmembrane region" description="Helical" evidence="4">
    <location>
        <begin position="462"/>
        <end position="482"/>
    </location>
</feature>
<feature type="topological domain" description="Extracellular" evidence="4">
    <location>
        <begin position="483"/>
        <end position="505"/>
    </location>
</feature>
<feature type="transmembrane region" description="Helical" evidence="4">
    <location>
        <begin position="506"/>
        <end position="526"/>
    </location>
</feature>
<feature type="topological domain" description="Cytoplasmic" evidence="4">
    <location>
        <begin position="527"/>
        <end position="552"/>
    </location>
</feature>
<feature type="transmembrane region" description="Helical" evidence="4">
    <location>
        <begin position="553"/>
        <end position="573"/>
    </location>
</feature>
<feature type="topological domain" description="Extracellular" evidence="4">
    <location>
        <begin position="574"/>
        <end position="582"/>
    </location>
</feature>
<feature type="transmembrane region" description="Helical" evidence="4">
    <location>
        <begin position="583"/>
        <end position="603"/>
    </location>
</feature>
<feature type="topological domain" description="Cytoplasmic" evidence="4">
    <location>
        <begin position="604"/>
        <end position="759"/>
    </location>
</feature>
<feature type="repeat" description="ANK 1" evidence="4">
    <location>
        <begin position="46"/>
        <end position="75"/>
    </location>
</feature>
<feature type="repeat" description="ANK 2" evidence="4">
    <location>
        <begin position="83"/>
        <end position="112"/>
    </location>
</feature>
<feature type="repeat" description="ANK 3" evidence="4">
    <location>
        <begin position="124"/>
        <end position="153"/>
    </location>
</feature>
<feature type="region of interest" description="Disordered" evidence="5">
    <location>
        <begin position="1"/>
        <end position="30"/>
    </location>
</feature>
<feature type="compositionally biased region" description="Low complexity" evidence="5">
    <location>
        <begin position="15"/>
        <end position="28"/>
    </location>
</feature>
<proteinExistence type="evidence at transcript level"/>
<dbReference type="EMBL" id="AF170493">
    <property type="protein sequence ID" value="AAD50982.1"/>
    <property type="molecule type" value="mRNA"/>
</dbReference>
<dbReference type="RefSeq" id="NP_001076120.1">
    <property type="nucleotide sequence ID" value="NM_001082651.1"/>
</dbReference>
<dbReference type="SMR" id="Q9TUN9"/>
<dbReference type="CORUM" id="Q9TUN9"/>
<dbReference type="STRING" id="9986.ENSOCUP00000015208"/>
<dbReference type="PaxDb" id="9986-ENSOCUP00000015208"/>
<dbReference type="GeneID" id="100009352"/>
<dbReference type="KEGG" id="ocu:100009352"/>
<dbReference type="CTD" id="7220"/>
<dbReference type="eggNOG" id="KOG3609">
    <property type="taxonomic scope" value="Eukaryota"/>
</dbReference>
<dbReference type="InParanoid" id="Q9TUN9"/>
<dbReference type="OrthoDB" id="2373987at2759"/>
<dbReference type="Proteomes" id="UP000001811">
    <property type="component" value="Unplaced"/>
</dbReference>
<dbReference type="GO" id="GO:0034703">
    <property type="term" value="C:cation channel complex"/>
    <property type="evidence" value="ECO:0007669"/>
    <property type="project" value="TreeGrafter"/>
</dbReference>
<dbReference type="GO" id="GO:0005886">
    <property type="term" value="C:plasma membrane"/>
    <property type="evidence" value="ECO:0007669"/>
    <property type="project" value="UniProtKB-SubCell"/>
</dbReference>
<dbReference type="GO" id="GO:0070679">
    <property type="term" value="F:inositol 1,4,5 trisphosphate binding"/>
    <property type="evidence" value="ECO:0007669"/>
    <property type="project" value="TreeGrafter"/>
</dbReference>
<dbReference type="GO" id="GO:0015279">
    <property type="term" value="F:store-operated calcium channel activity"/>
    <property type="evidence" value="ECO:0000250"/>
    <property type="project" value="UniProtKB"/>
</dbReference>
<dbReference type="GO" id="GO:0051480">
    <property type="term" value="P:regulation of cytosolic calcium ion concentration"/>
    <property type="evidence" value="ECO:0007669"/>
    <property type="project" value="TreeGrafter"/>
</dbReference>
<dbReference type="FunFam" id="1.25.40.20:FF:000088">
    <property type="entry name" value="short transient receptor potential channel 1 isoform X1"/>
    <property type="match status" value="1"/>
</dbReference>
<dbReference type="FunFam" id="1.10.287.70:FF:000266">
    <property type="entry name" value="Transient receptor potential cation channel subfamily c member 1"/>
    <property type="match status" value="1"/>
</dbReference>
<dbReference type="Gene3D" id="1.25.40.20">
    <property type="entry name" value="Ankyrin repeat-containing domain"/>
    <property type="match status" value="1"/>
</dbReference>
<dbReference type="InterPro" id="IPR002110">
    <property type="entry name" value="Ankyrin_rpt"/>
</dbReference>
<dbReference type="InterPro" id="IPR036770">
    <property type="entry name" value="Ankyrin_rpt-contain_sf"/>
</dbReference>
<dbReference type="InterPro" id="IPR005821">
    <property type="entry name" value="Ion_trans_dom"/>
</dbReference>
<dbReference type="InterPro" id="IPR013555">
    <property type="entry name" value="TRP_dom"/>
</dbReference>
<dbReference type="InterPro" id="IPR005457">
    <property type="entry name" value="TRPC1_channel"/>
</dbReference>
<dbReference type="InterPro" id="IPR002153">
    <property type="entry name" value="TRPC_channel"/>
</dbReference>
<dbReference type="NCBIfam" id="TIGR00870">
    <property type="entry name" value="trp"/>
    <property type="match status" value="1"/>
</dbReference>
<dbReference type="PANTHER" id="PTHR10117:SF56">
    <property type="entry name" value="SHORT TRANSIENT RECEPTOR POTENTIAL CHANNEL 1"/>
    <property type="match status" value="1"/>
</dbReference>
<dbReference type="PANTHER" id="PTHR10117">
    <property type="entry name" value="TRANSIENT RECEPTOR POTENTIAL CHANNEL"/>
    <property type="match status" value="1"/>
</dbReference>
<dbReference type="Pfam" id="PF12796">
    <property type="entry name" value="Ank_2"/>
    <property type="match status" value="1"/>
</dbReference>
<dbReference type="Pfam" id="PF00520">
    <property type="entry name" value="Ion_trans"/>
    <property type="match status" value="1"/>
</dbReference>
<dbReference type="Pfam" id="PF08344">
    <property type="entry name" value="TRP_2"/>
    <property type="match status" value="1"/>
</dbReference>
<dbReference type="PRINTS" id="PR01097">
    <property type="entry name" value="TRNSRECEPTRP"/>
</dbReference>
<dbReference type="PRINTS" id="PR01642">
    <property type="entry name" value="TRPCHANNEL1"/>
</dbReference>
<dbReference type="SMART" id="SM00248">
    <property type="entry name" value="ANK"/>
    <property type="match status" value="3"/>
</dbReference>
<dbReference type="SMART" id="SM01420">
    <property type="entry name" value="TRP_2"/>
    <property type="match status" value="1"/>
</dbReference>
<dbReference type="SUPFAM" id="SSF48403">
    <property type="entry name" value="Ankyrin repeat"/>
    <property type="match status" value="1"/>
</dbReference>
<accession>Q9TUN9</accession>
<comment type="function">
    <text evidence="1">Forms a receptor-activated non-selective calcium permeant cation channel. Probably is operated by a phosphatidylinositol second messenger system activated by receptor tyrosine kinases or G-protein coupled receptors. Also activated by intracellular calcium store depletion.</text>
</comment>
<comment type="catalytic activity">
    <reaction evidence="1">
        <text>Ca(2+)(in) = Ca(2+)(out)</text>
        <dbReference type="Rhea" id="RHEA:29671"/>
        <dbReference type="ChEBI" id="CHEBI:29108"/>
    </reaction>
</comment>
<comment type="subunit">
    <text evidence="1 2 3">Homotetramer and heterotetramer with TRPC4 and/or TRPC5 (By similarity). Interacts with TRPC4 and TRPC5 (By similarity). Interacts with ITPR3 (By similarity). Interacts with MX1 and RNF24 (By similarity). Interacts with FKBP4 (By similarity). Interacts with TRPC4AP (By similarity). Interacts with PLSCR1 (By similarity). Interacts with PKD2L2 (By similarity). Forms a heterotetramer with PKD2 with a 2:2 stoichiometry; has distinct channel properties separate from PKD2 or TRPC1 homomers alone (By similarity).</text>
</comment>
<comment type="subcellular location">
    <subcellularLocation>
        <location evidence="1">Cell membrane</location>
        <topology evidence="4">Multi-pass membrane protein</topology>
    </subcellularLocation>
</comment>
<comment type="PTM">
    <text evidence="1">Activation of PRKCA induces phosphorylation of TRPC1 and subsequent Ca2+ entry into cells.</text>
</comment>
<comment type="similarity">
    <text evidence="6">Belongs to the transient receptor (TC 1.A.4) family. STrpC subfamily. TRPC1 sub-subfamily.</text>
</comment>
<gene>
    <name type="primary">TRPC1</name>
    <name type="synonym">TRPC1A</name>
</gene>
<organism>
    <name type="scientific">Oryctolagus cuniculus</name>
    <name type="common">Rabbit</name>
    <dbReference type="NCBI Taxonomy" id="9986"/>
    <lineage>
        <taxon>Eukaryota</taxon>
        <taxon>Metazoa</taxon>
        <taxon>Chordata</taxon>
        <taxon>Craniata</taxon>
        <taxon>Vertebrata</taxon>
        <taxon>Euteleostomi</taxon>
        <taxon>Mammalia</taxon>
        <taxon>Eutheria</taxon>
        <taxon>Euarchontoglires</taxon>
        <taxon>Glires</taxon>
        <taxon>Lagomorpha</taxon>
        <taxon>Leporidae</taxon>
        <taxon>Oryctolagus</taxon>
    </lineage>
</organism>
<sequence>MMAALYPSTDLSGASSSSLPSSPSSSSPNEVMALKDVREVKEENTLNEKLFLLACDKGDYYMVKKILEENSSGDLNINCVDVLGRNAVTITIENENLDILQLLLDYGCQKLMERIQNPEYSTTMDVAPVILAAHRNNYEILTMLLKQDVSLPKPHAVGCECTLCSAKNKKDSLRHSRFRLDIYRCLASPALIMLTEEDPILRAFELSADLKELSLVEVEFRNDYEELARQCKMFAKDLLAQARNSRELEVILNHTSSDEPLDKRGLLEERMNLSRLKLAIKYNQKEFVSQSNCQQFLNTVWFGQMSGYRRKPTCKKIMTVLTVGIFWPVLSLCYLIAPKSQFGRIIHTPFMKFIIHGASYFTFLLLLNLYSLVYNEDKKNTMGPALERIDYLLILWIIGMIWSDIKRLWYEGLEDFLEESRNQLSFVMNSLYLATFALKVVAHNKFHDFADRKDWDAFHPTLVAEGLFAFANVLSYLRLFFMYTTSSILGPLQISMGQMLQDFGKFLGMFLLVLFSFTIGLTQLYDKGYTPKEQKDCVGIFCEQQSNDTFHSFIGTCFALFWYIFSLAHVAIFVTRFSYGEELQSFVGAVIVGTYNVVVVIVLTKLLVAMLHKSFQLIANHEDKEWKFARAKLWLSYFDDKCTLPPPFNIIPSPKTICYMISSLSKWICSHTSKGKVKRQNSLKEWRNLKQKRDENYQKVMCCLVHRYLTSMRQKMQSTDQATVENLNELRQDLSKFRNEIRDLLGFRTSKYAMFYPRN</sequence>
<protein>
    <recommendedName>
        <fullName>Short transient receptor potential channel 1</fullName>
        <shortName>TrpC1</shortName>
    </recommendedName>
    <alternativeName>
        <fullName>Calcium influx channel TRPC1A</fullName>
    </alternativeName>
</protein>
<evidence type="ECO:0000250" key="1">
    <source>
        <dbReference type="UniProtKB" id="P48995"/>
    </source>
</evidence>
<evidence type="ECO:0000250" key="2">
    <source>
        <dbReference type="UniProtKB" id="Q61056"/>
    </source>
</evidence>
<evidence type="ECO:0000250" key="3">
    <source>
        <dbReference type="UniProtKB" id="Q9QX01"/>
    </source>
</evidence>
<evidence type="ECO:0000255" key="4"/>
<evidence type="ECO:0000256" key="5">
    <source>
        <dbReference type="SAM" id="MobiDB-lite"/>
    </source>
</evidence>
<evidence type="ECO:0000305" key="6"/>
<name>TRPC1_RABIT</name>